<evidence type="ECO:0000250" key="1"/>
<evidence type="ECO:0000255" key="2">
    <source>
        <dbReference type="PROSITE-ProRule" id="PRU01163"/>
    </source>
</evidence>
<evidence type="ECO:0000305" key="3"/>
<name>HPPD_PYRO7</name>
<organism>
    <name type="scientific">Pyricularia oryzae (strain 70-15 / ATCC MYA-4617 / FGSC 8958)</name>
    <name type="common">Rice blast fungus</name>
    <name type="synonym">Magnaporthe oryzae</name>
    <dbReference type="NCBI Taxonomy" id="242507"/>
    <lineage>
        <taxon>Eukaryota</taxon>
        <taxon>Fungi</taxon>
        <taxon>Dikarya</taxon>
        <taxon>Ascomycota</taxon>
        <taxon>Pezizomycotina</taxon>
        <taxon>Sordariomycetes</taxon>
        <taxon>Sordariomycetidae</taxon>
        <taxon>Magnaporthales</taxon>
        <taxon>Pyriculariaceae</taxon>
        <taxon>Pyricularia</taxon>
    </lineage>
</organism>
<comment type="catalytic activity">
    <reaction>
        <text>3-(4-hydroxyphenyl)pyruvate + O2 = homogentisate + CO2</text>
        <dbReference type="Rhea" id="RHEA:16189"/>
        <dbReference type="ChEBI" id="CHEBI:15379"/>
        <dbReference type="ChEBI" id="CHEBI:16169"/>
        <dbReference type="ChEBI" id="CHEBI:16526"/>
        <dbReference type="ChEBI" id="CHEBI:36242"/>
        <dbReference type="EC" id="1.13.11.27"/>
    </reaction>
</comment>
<comment type="cofactor">
    <cofactor evidence="1">
        <name>Fe cation</name>
        <dbReference type="ChEBI" id="CHEBI:24875"/>
    </cofactor>
    <text evidence="1">Binds 1 Fe cation per subunit.</text>
</comment>
<comment type="pathway">
    <text>Amino-acid degradation; L-phenylalanine degradation; acetoacetate and fumarate from L-phenylalanine: step 3/6.</text>
</comment>
<comment type="similarity">
    <text evidence="3">Belongs to the 4HPPD family.</text>
</comment>
<feature type="chain" id="PRO_0000088404" description="4-hydroxyphenylpyruvate dioxygenase">
    <location>
        <begin position="1"/>
        <end position="419"/>
    </location>
</feature>
<feature type="domain" description="VOC 1" evidence="2">
    <location>
        <begin position="37"/>
        <end position="185"/>
    </location>
</feature>
<feature type="domain" description="VOC 2" evidence="2">
    <location>
        <begin position="216"/>
        <end position="376"/>
    </location>
</feature>
<feature type="binding site" evidence="1">
    <location>
        <position position="219"/>
    </location>
    <ligand>
        <name>Fe cation</name>
        <dbReference type="ChEBI" id="CHEBI:24875"/>
    </ligand>
</feature>
<feature type="binding site" evidence="1">
    <location>
        <position position="302"/>
    </location>
    <ligand>
        <name>Fe cation</name>
        <dbReference type="ChEBI" id="CHEBI:24875"/>
    </ligand>
</feature>
<feature type="binding site" evidence="1">
    <location>
        <position position="387"/>
    </location>
    <ligand>
        <name>Fe cation</name>
        <dbReference type="ChEBI" id="CHEBI:24875"/>
    </ligand>
</feature>
<accession>Q96X22</accession>
<accession>A4R2B8</accession>
<accession>G4ML51</accession>
<reference key="1">
    <citation type="journal article" date="2001" name="Proc. Natl. Acad. Sci. U.S.A.">
        <title>Gene discovery and gene function assignment in filamentous fungi.</title>
        <authorList>
            <person name="Hamer L."/>
            <person name="Adachi K."/>
            <person name="Montenegro-Chamorro M.V."/>
            <person name="Tanzer M."/>
            <person name="Mahanty S."/>
            <person name="Lo C."/>
            <person name="Tarpey R.W."/>
            <person name="Skalchunes A."/>
            <person name="Heiniger R."/>
            <person name="Frank S."/>
            <person name="Darveaux B."/>
            <person name="Lampe D.J."/>
            <person name="Slater T."/>
            <person name="Ramamurthy L."/>
            <person name="Dezwaan T."/>
            <person name="Nelson G."/>
            <person name="Shuster J."/>
            <person name="Woessner J."/>
            <person name="Hamer J.E."/>
        </authorList>
    </citation>
    <scope>NUCLEOTIDE SEQUENCE [GENOMIC DNA]</scope>
    <source>
        <strain>Guyane 11</strain>
    </source>
</reference>
<reference key="2">
    <citation type="journal article" date="2005" name="Nature">
        <title>The genome sequence of the rice blast fungus Magnaporthe grisea.</title>
        <authorList>
            <person name="Dean R.A."/>
            <person name="Talbot N.J."/>
            <person name="Ebbole D.J."/>
            <person name="Farman M.L."/>
            <person name="Mitchell T.K."/>
            <person name="Orbach M.J."/>
            <person name="Thon M.R."/>
            <person name="Kulkarni R."/>
            <person name="Xu J.-R."/>
            <person name="Pan H."/>
            <person name="Read N.D."/>
            <person name="Lee Y.-H."/>
            <person name="Carbone I."/>
            <person name="Brown D."/>
            <person name="Oh Y.Y."/>
            <person name="Donofrio N."/>
            <person name="Jeong J.S."/>
            <person name="Soanes D.M."/>
            <person name="Djonovic S."/>
            <person name="Kolomiets E."/>
            <person name="Rehmeyer C."/>
            <person name="Li W."/>
            <person name="Harding M."/>
            <person name="Kim S."/>
            <person name="Lebrun M.-H."/>
            <person name="Bohnert H."/>
            <person name="Coughlan S."/>
            <person name="Butler J."/>
            <person name="Calvo S.E."/>
            <person name="Ma L.-J."/>
            <person name="Nicol R."/>
            <person name="Purcell S."/>
            <person name="Nusbaum C."/>
            <person name="Galagan J.E."/>
            <person name="Birren B.W."/>
        </authorList>
    </citation>
    <scope>NUCLEOTIDE SEQUENCE [LARGE SCALE GENOMIC DNA]</scope>
    <source>
        <strain>70-15 / ATCC MYA-4617 / FGSC 8958</strain>
    </source>
</reference>
<proteinExistence type="inferred from homology"/>
<gene>
    <name type="primary">HPD4</name>
    <name type="ORF">MGG_06691</name>
</gene>
<dbReference type="EC" id="1.13.11.27"/>
<dbReference type="EMBL" id="AF325533">
    <property type="protein sequence ID" value="AAK48714.1"/>
    <property type="molecule type" value="Genomic_DNA"/>
</dbReference>
<dbReference type="EMBL" id="CM001231">
    <property type="protein sequence ID" value="EHA56787.1"/>
    <property type="molecule type" value="Genomic_DNA"/>
</dbReference>
<dbReference type="RefSeq" id="XP_003709399.1">
    <property type="nucleotide sequence ID" value="XM_003709351.1"/>
</dbReference>
<dbReference type="SMR" id="Q96X22"/>
<dbReference type="STRING" id="242507.Q96X22"/>
<dbReference type="EnsemblFungi" id="MGG_06691T0">
    <property type="protein sequence ID" value="MGG_06691T0"/>
    <property type="gene ID" value="MGG_06691"/>
</dbReference>
<dbReference type="GeneID" id="2684864"/>
<dbReference type="KEGG" id="mgr:MGG_06691"/>
<dbReference type="VEuPathDB" id="FungiDB:MGG_06691"/>
<dbReference type="eggNOG" id="KOG0638">
    <property type="taxonomic scope" value="Eukaryota"/>
</dbReference>
<dbReference type="HOGENOM" id="CLU_034004_3_1_1"/>
<dbReference type="InParanoid" id="Q96X22"/>
<dbReference type="OMA" id="DPFPVKG"/>
<dbReference type="OrthoDB" id="414569at2759"/>
<dbReference type="UniPathway" id="UPA00139">
    <property type="reaction ID" value="UER00362"/>
</dbReference>
<dbReference type="Proteomes" id="UP000009058">
    <property type="component" value="Chromosome 1"/>
</dbReference>
<dbReference type="GO" id="GO:0003868">
    <property type="term" value="F:4-hydroxyphenylpyruvate dioxygenase activity"/>
    <property type="evidence" value="ECO:0007669"/>
    <property type="project" value="UniProtKB-EC"/>
</dbReference>
<dbReference type="GO" id="GO:0046872">
    <property type="term" value="F:metal ion binding"/>
    <property type="evidence" value="ECO:0007669"/>
    <property type="project" value="UniProtKB-KW"/>
</dbReference>
<dbReference type="GO" id="GO:0006559">
    <property type="term" value="P:L-phenylalanine catabolic process"/>
    <property type="evidence" value="ECO:0007669"/>
    <property type="project" value="UniProtKB-UniPathway"/>
</dbReference>
<dbReference type="GO" id="GO:0006572">
    <property type="term" value="P:tyrosine catabolic process"/>
    <property type="evidence" value="ECO:0007669"/>
    <property type="project" value="UniProtKB-KW"/>
</dbReference>
<dbReference type="CDD" id="cd07250">
    <property type="entry name" value="HPPD_C_like"/>
    <property type="match status" value="1"/>
</dbReference>
<dbReference type="CDD" id="cd08342">
    <property type="entry name" value="HPPD_N_like"/>
    <property type="match status" value="1"/>
</dbReference>
<dbReference type="FunFam" id="3.10.180.10:FF:000001">
    <property type="entry name" value="4-hydroxyphenylpyruvate dioxygenase"/>
    <property type="match status" value="1"/>
</dbReference>
<dbReference type="FunFam" id="3.10.180.10:FF:000020">
    <property type="entry name" value="4-hydroxyphenylpyruvate dioxygenase"/>
    <property type="match status" value="1"/>
</dbReference>
<dbReference type="Gene3D" id="3.10.180.10">
    <property type="entry name" value="2,3-Dihydroxybiphenyl 1,2-Dioxygenase, domain 1"/>
    <property type="match status" value="2"/>
</dbReference>
<dbReference type="InterPro" id="IPR005956">
    <property type="entry name" value="4OHPhenylPyrv_dOase"/>
</dbReference>
<dbReference type="InterPro" id="IPR041735">
    <property type="entry name" value="4OHPhenylPyrv_dOase_C"/>
</dbReference>
<dbReference type="InterPro" id="IPR041736">
    <property type="entry name" value="4OHPhenylPyrv_dOase_N"/>
</dbReference>
<dbReference type="InterPro" id="IPR029068">
    <property type="entry name" value="Glyas_Bleomycin-R_OHBP_Dase"/>
</dbReference>
<dbReference type="InterPro" id="IPR004360">
    <property type="entry name" value="Glyas_Fos-R_dOase_dom"/>
</dbReference>
<dbReference type="InterPro" id="IPR037523">
    <property type="entry name" value="VOC"/>
</dbReference>
<dbReference type="NCBIfam" id="TIGR01263">
    <property type="entry name" value="4HPPD"/>
    <property type="match status" value="1"/>
</dbReference>
<dbReference type="PANTHER" id="PTHR11959">
    <property type="entry name" value="4-HYDROXYPHENYLPYRUVATE DIOXYGENASE"/>
    <property type="match status" value="1"/>
</dbReference>
<dbReference type="PANTHER" id="PTHR11959:SF1">
    <property type="entry name" value="4-HYDROXYPHENYLPYRUVATE DIOXYGENASE"/>
    <property type="match status" value="1"/>
</dbReference>
<dbReference type="Pfam" id="PF00903">
    <property type="entry name" value="Glyoxalase"/>
    <property type="match status" value="2"/>
</dbReference>
<dbReference type="PIRSF" id="PIRSF009283">
    <property type="entry name" value="HPP_dOase"/>
    <property type="match status" value="1"/>
</dbReference>
<dbReference type="SUPFAM" id="SSF54593">
    <property type="entry name" value="Glyoxalase/Bleomycin resistance protein/Dihydroxybiphenyl dioxygenase"/>
    <property type="match status" value="1"/>
</dbReference>
<dbReference type="PROSITE" id="PS51819">
    <property type="entry name" value="VOC"/>
    <property type="match status" value="2"/>
</dbReference>
<sequence length="419" mass="47576">MSPSAITESPRNSVVDHTSGLQVDSLAVQGPFPSFHGYDHVTWWVGNAKQAASYYNTLFGMKIIAYRGLETGSRYFASYLVGKEDVRFVFTSPIRSHVHLPEDEPISDEDRALLKEMHAHLEKHGDAVKDVCFEVDNVQGVYERAVQQGAVSIAPPKTLSDKEHGSVTMAVIQTYGDTTHTLLSRDNFRGTFLPGFRDVNRQPAAYSALAPVPLQRIDHCVGNQDWDDMRAACDFYERCLSFHRFWSVDDNQISTDFSALNSIVMASPNNVVKMPINEPAKGKKRSQIEEYVTFNSGAGVQHIALLTSDIITTVEAMRSRGVEFIEVPHTYYDTMRRRLKTEKRDWELQEDFDRLVRNNILIDYDEGGYLLQLFTRPLMDRPTVFIEIIQRNEFDGFGAGNFKSLFEAIEREQAERGNL</sequence>
<protein>
    <recommendedName>
        <fullName>4-hydroxyphenylpyruvate dioxygenase</fullName>
        <shortName>4HPPD</shortName>
        <shortName>HPD</shortName>
        <shortName>HPPDase</shortName>
        <ecNumber>1.13.11.27</ecNumber>
    </recommendedName>
</protein>
<keyword id="KW-0223">Dioxygenase</keyword>
<keyword id="KW-0408">Iron</keyword>
<keyword id="KW-0479">Metal-binding</keyword>
<keyword id="KW-0560">Oxidoreductase</keyword>
<keyword id="KW-0585">Phenylalanine catabolism</keyword>
<keyword id="KW-1185">Reference proteome</keyword>
<keyword id="KW-0677">Repeat</keyword>
<keyword id="KW-0828">Tyrosine catabolism</keyword>